<gene>
    <name evidence="1" type="primary">hslU</name>
    <name type="ordered locus">Mlg_0067</name>
</gene>
<accession>Q0ACL3</accession>
<protein>
    <recommendedName>
        <fullName evidence="1">ATP-dependent protease ATPase subunit HslU</fullName>
    </recommendedName>
    <alternativeName>
        <fullName evidence="1">Unfoldase HslU</fullName>
    </alternativeName>
</protein>
<keyword id="KW-0067">ATP-binding</keyword>
<keyword id="KW-0143">Chaperone</keyword>
<keyword id="KW-0963">Cytoplasm</keyword>
<keyword id="KW-0547">Nucleotide-binding</keyword>
<keyword id="KW-1185">Reference proteome</keyword>
<keyword id="KW-0346">Stress response</keyword>
<comment type="function">
    <text evidence="1">ATPase subunit of a proteasome-like degradation complex; this subunit has chaperone activity. The binding of ATP and its subsequent hydrolysis by HslU are essential for unfolding of protein substrates subsequently hydrolyzed by HslV. HslU recognizes the N-terminal part of its protein substrates and unfolds these before they are guided to HslV for hydrolysis.</text>
</comment>
<comment type="subunit">
    <text evidence="1">A double ring-shaped homohexamer of HslV is capped on each side by a ring-shaped HslU homohexamer. The assembly of the HslU/HslV complex is dependent on binding of ATP.</text>
</comment>
<comment type="subcellular location">
    <subcellularLocation>
        <location evidence="1">Cytoplasm</location>
    </subcellularLocation>
</comment>
<comment type="similarity">
    <text evidence="1">Belongs to the ClpX chaperone family. HslU subfamily.</text>
</comment>
<organism>
    <name type="scientific">Alkalilimnicola ehrlichii (strain ATCC BAA-1101 / DSM 17681 / MLHE-1)</name>
    <dbReference type="NCBI Taxonomy" id="187272"/>
    <lineage>
        <taxon>Bacteria</taxon>
        <taxon>Pseudomonadati</taxon>
        <taxon>Pseudomonadota</taxon>
        <taxon>Gammaproteobacteria</taxon>
        <taxon>Chromatiales</taxon>
        <taxon>Ectothiorhodospiraceae</taxon>
        <taxon>Alkalilimnicola</taxon>
    </lineage>
</organism>
<name>HSLU_ALKEH</name>
<feature type="chain" id="PRO_1000012698" description="ATP-dependent protease ATPase subunit HslU">
    <location>
        <begin position="1"/>
        <end position="440"/>
    </location>
</feature>
<feature type="region of interest" description="Disordered" evidence="2">
    <location>
        <begin position="138"/>
        <end position="159"/>
    </location>
</feature>
<feature type="binding site" evidence="1">
    <location>
        <position position="18"/>
    </location>
    <ligand>
        <name>ATP</name>
        <dbReference type="ChEBI" id="CHEBI:30616"/>
    </ligand>
</feature>
<feature type="binding site" evidence="1">
    <location>
        <begin position="60"/>
        <end position="65"/>
    </location>
    <ligand>
        <name>ATP</name>
        <dbReference type="ChEBI" id="CHEBI:30616"/>
    </ligand>
</feature>
<feature type="binding site" evidence="1">
    <location>
        <position position="252"/>
    </location>
    <ligand>
        <name>ATP</name>
        <dbReference type="ChEBI" id="CHEBI:30616"/>
    </ligand>
</feature>
<feature type="binding site" evidence="1">
    <location>
        <position position="318"/>
    </location>
    <ligand>
        <name>ATP</name>
        <dbReference type="ChEBI" id="CHEBI:30616"/>
    </ligand>
</feature>
<feature type="binding site" evidence="1">
    <location>
        <position position="390"/>
    </location>
    <ligand>
        <name>ATP</name>
        <dbReference type="ChEBI" id="CHEBI:30616"/>
    </ligand>
</feature>
<reference key="1">
    <citation type="submission" date="2006-08" db="EMBL/GenBank/DDBJ databases">
        <title>Complete sequence of Alkalilimnicola ehrilichei MLHE-1.</title>
        <authorList>
            <person name="Copeland A."/>
            <person name="Lucas S."/>
            <person name="Lapidus A."/>
            <person name="Barry K."/>
            <person name="Detter J.C."/>
            <person name="Glavina del Rio T."/>
            <person name="Hammon N."/>
            <person name="Israni S."/>
            <person name="Dalin E."/>
            <person name="Tice H."/>
            <person name="Pitluck S."/>
            <person name="Sims D."/>
            <person name="Brettin T."/>
            <person name="Bruce D."/>
            <person name="Han C."/>
            <person name="Tapia R."/>
            <person name="Gilna P."/>
            <person name="Schmutz J."/>
            <person name="Larimer F."/>
            <person name="Land M."/>
            <person name="Hauser L."/>
            <person name="Kyrpides N."/>
            <person name="Mikhailova N."/>
            <person name="Oremland R.S."/>
            <person name="Hoeft S.E."/>
            <person name="Switzer-Blum J."/>
            <person name="Kulp T."/>
            <person name="King G."/>
            <person name="Tabita R."/>
            <person name="Witte B."/>
            <person name="Santini J.M."/>
            <person name="Basu P."/>
            <person name="Hollibaugh J.T."/>
            <person name="Xie G."/>
            <person name="Stolz J.F."/>
            <person name="Richardson P."/>
        </authorList>
    </citation>
    <scope>NUCLEOTIDE SEQUENCE [LARGE SCALE GENOMIC DNA]</scope>
    <source>
        <strain>ATCC BAA-1101 / DSM 17681 / MLHE-1</strain>
    </source>
</reference>
<evidence type="ECO:0000255" key="1">
    <source>
        <dbReference type="HAMAP-Rule" id="MF_00249"/>
    </source>
</evidence>
<evidence type="ECO:0000256" key="2">
    <source>
        <dbReference type="SAM" id="MobiDB-lite"/>
    </source>
</evidence>
<dbReference type="EMBL" id="CP000453">
    <property type="protein sequence ID" value="ABI55424.1"/>
    <property type="molecule type" value="Genomic_DNA"/>
</dbReference>
<dbReference type="RefSeq" id="WP_011627820.1">
    <property type="nucleotide sequence ID" value="NC_008340.1"/>
</dbReference>
<dbReference type="SMR" id="Q0ACL3"/>
<dbReference type="KEGG" id="aeh:Mlg_0067"/>
<dbReference type="eggNOG" id="COG1220">
    <property type="taxonomic scope" value="Bacteria"/>
</dbReference>
<dbReference type="HOGENOM" id="CLU_033123_0_0_6"/>
<dbReference type="OrthoDB" id="9804062at2"/>
<dbReference type="Proteomes" id="UP000001962">
    <property type="component" value="Chromosome"/>
</dbReference>
<dbReference type="GO" id="GO:0009376">
    <property type="term" value="C:HslUV protease complex"/>
    <property type="evidence" value="ECO:0007669"/>
    <property type="project" value="UniProtKB-UniRule"/>
</dbReference>
<dbReference type="GO" id="GO:0005524">
    <property type="term" value="F:ATP binding"/>
    <property type="evidence" value="ECO:0007669"/>
    <property type="project" value="UniProtKB-UniRule"/>
</dbReference>
<dbReference type="GO" id="GO:0016887">
    <property type="term" value="F:ATP hydrolysis activity"/>
    <property type="evidence" value="ECO:0007669"/>
    <property type="project" value="InterPro"/>
</dbReference>
<dbReference type="GO" id="GO:0008233">
    <property type="term" value="F:peptidase activity"/>
    <property type="evidence" value="ECO:0007669"/>
    <property type="project" value="InterPro"/>
</dbReference>
<dbReference type="GO" id="GO:0036402">
    <property type="term" value="F:proteasome-activating activity"/>
    <property type="evidence" value="ECO:0007669"/>
    <property type="project" value="UniProtKB-UniRule"/>
</dbReference>
<dbReference type="GO" id="GO:0043335">
    <property type="term" value="P:protein unfolding"/>
    <property type="evidence" value="ECO:0007669"/>
    <property type="project" value="UniProtKB-UniRule"/>
</dbReference>
<dbReference type="GO" id="GO:0051603">
    <property type="term" value="P:proteolysis involved in protein catabolic process"/>
    <property type="evidence" value="ECO:0007669"/>
    <property type="project" value="TreeGrafter"/>
</dbReference>
<dbReference type="CDD" id="cd19498">
    <property type="entry name" value="RecA-like_HslU"/>
    <property type="match status" value="1"/>
</dbReference>
<dbReference type="FunFam" id="3.40.50.300:FF:000213">
    <property type="entry name" value="ATP-dependent protease ATPase subunit HslU"/>
    <property type="match status" value="1"/>
</dbReference>
<dbReference type="FunFam" id="3.40.50.300:FF:000220">
    <property type="entry name" value="ATP-dependent protease ATPase subunit HslU"/>
    <property type="match status" value="1"/>
</dbReference>
<dbReference type="Gene3D" id="1.10.8.60">
    <property type="match status" value="1"/>
</dbReference>
<dbReference type="Gene3D" id="3.40.50.300">
    <property type="entry name" value="P-loop containing nucleotide triphosphate hydrolases"/>
    <property type="match status" value="2"/>
</dbReference>
<dbReference type="HAMAP" id="MF_00249">
    <property type="entry name" value="HslU"/>
    <property type="match status" value="1"/>
</dbReference>
<dbReference type="InterPro" id="IPR003593">
    <property type="entry name" value="AAA+_ATPase"/>
</dbReference>
<dbReference type="InterPro" id="IPR050052">
    <property type="entry name" value="ATP-dep_Clp_protease_ClpX"/>
</dbReference>
<dbReference type="InterPro" id="IPR003959">
    <property type="entry name" value="ATPase_AAA_core"/>
</dbReference>
<dbReference type="InterPro" id="IPR019489">
    <property type="entry name" value="Clp_ATPase_C"/>
</dbReference>
<dbReference type="InterPro" id="IPR004491">
    <property type="entry name" value="HslU"/>
</dbReference>
<dbReference type="InterPro" id="IPR027417">
    <property type="entry name" value="P-loop_NTPase"/>
</dbReference>
<dbReference type="NCBIfam" id="TIGR00390">
    <property type="entry name" value="hslU"/>
    <property type="match status" value="1"/>
</dbReference>
<dbReference type="NCBIfam" id="NF003544">
    <property type="entry name" value="PRK05201.1"/>
    <property type="match status" value="1"/>
</dbReference>
<dbReference type="PANTHER" id="PTHR48102">
    <property type="entry name" value="ATP-DEPENDENT CLP PROTEASE ATP-BINDING SUBUNIT CLPX-LIKE, MITOCHONDRIAL-RELATED"/>
    <property type="match status" value="1"/>
</dbReference>
<dbReference type="PANTHER" id="PTHR48102:SF3">
    <property type="entry name" value="ATP-DEPENDENT PROTEASE ATPASE SUBUNIT HSLU"/>
    <property type="match status" value="1"/>
</dbReference>
<dbReference type="Pfam" id="PF00004">
    <property type="entry name" value="AAA"/>
    <property type="match status" value="1"/>
</dbReference>
<dbReference type="Pfam" id="PF07724">
    <property type="entry name" value="AAA_2"/>
    <property type="match status" value="1"/>
</dbReference>
<dbReference type="SMART" id="SM00382">
    <property type="entry name" value="AAA"/>
    <property type="match status" value="1"/>
</dbReference>
<dbReference type="SMART" id="SM01086">
    <property type="entry name" value="ClpB_D2-small"/>
    <property type="match status" value="1"/>
</dbReference>
<dbReference type="SUPFAM" id="SSF52540">
    <property type="entry name" value="P-loop containing nucleoside triphosphate hydrolases"/>
    <property type="match status" value="1"/>
</dbReference>
<proteinExistence type="inferred from homology"/>
<sequence>MSEMTPREIVQELDKYIIGQDAAKRSVAIALRNRWRRMQVDEALQPEITPKNILMIGPTGVGKTEIARRLAKLARAPFIKIEATKFTEVGYVGRDVESIIRDLVDIAIKLVREEAMERVQHQAADAAEDRVLDIMLPRAQSFDQEDPSAGTRQKLRKKLREGALDDREIEVELRASPMGVEIMAPPGMEEMTNQLQQMFQNFGGEKTKRRKMKVKDALEVLKDEEAARLVNDEDLKAEAVERVEQNAIVFLDEIDKVCKRAEQGTGGDVSREGVQRDLLPLVEGSTVSTKHGMVRTDHILFIASGAFHLSKPSDLIPELQGRLPIRVELEALTTDDFVRILSEPSASLVHQYQALIATEGCELEFTEDGIRRVAEVAWEVNSRTENIGARRLHTVMERLLEEISYSAADRGGQQVTVDADYVDQHLGGLVQDEDLSRYIL</sequence>